<dbReference type="EMBL" id="AE017340">
    <property type="protein sequence ID" value="AAV83457.1"/>
    <property type="molecule type" value="Genomic_DNA"/>
</dbReference>
<dbReference type="RefSeq" id="WP_011235848.1">
    <property type="nucleotide sequence ID" value="NC_006512.1"/>
</dbReference>
<dbReference type="SMR" id="Q5QZI0"/>
<dbReference type="STRING" id="283942.IL2625"/>
<dbReference type="GeneID" id="41337824"/>
<dbReference type="KEGG" id="ilo:IL2625"/>
<dbReference type="eggNOG" id="COG0356">
    <property type="taxonomic scope" value="Bacteria"/>
</dbReference>
<dbReference type="HOGENOM" id="CLU_041018_1_0_6"/>
<dbReference type="OrthoDB" id="9789241at2"/>
<dbReference type="Proteomes" id="UP000001171">
    <property type="component" value="Chromosome"/>
</dbReference>
<dbReference type="GO" id="GO:0005886">
    <property type="term" value="C:plasma membrane"/>
    <property type="evidence" value="ECO:0007669"/>
    <property type="project" value="UniProtKB-SubCell"/>
</dbReference>
<dbReference type="GO" id="GO:0045259">
    <property type="term" value="C:proton-transporting ATP synthase complex"/>
    <property type="evidence" value="ECO:0007669"/>
    <property type="project" value="UniProtKB-KW"/>
</dbReference>
<dbReference type="GO" id="GO:0046933">
    <property type="term" value="F:proton-transporting ATP synthase activity, rotational mechanism"/>
    <property type="evidence" value="ECO:0007669"/>
    <property type="project" value="UniProtKB-UniRule"/>
</dbReference>
<dbReference type="GO" id="GO:0042777">
    <property type="term" value="P:proton motive force-driven plasma membrane ATP synthesis"/>
    <property type="evidence" value="ECO:0007669"/>
    <property type="project" value="TreeGrafter"/>
</dbReference>
<dbReference type="CDD" id="cd00310">
    <property type="entry name" value="ATP-synt_Fo_a_6"/>
    <property type="match status" value="1"/>
</dbReference>
<dbReference type="FunFam" id="1.20.120.220:FF:000002">
    <property type="entry name" value="ATP synthase subunit a"/>
    <property type="match status" value="1"/>
</dbReference>
<dbReference type="Gene3D" id="1.20.120.220">
    <property type="entry name" value="ATP synthase, F0 complex, subunit A"/>
    <property type="match status" value="1"/>
</dbReference>
<dbReference type="HAMAP" id="MF_01393">
    <property type="entry name" value="ATP_synth_a_bact"/>
    <property type="match status" value="1"/>
</dbReference>
<dbReference type="InterPro" id="IPR045082">
    <property type="entry name" value="ATP_syn_F0_a_bact/chloroplast"/>
</dbReference>
<dbReference type="InterPro" id="IPR000568">
    <property type="entry name" value="ATP_synth_F0_asu"/>
</dbReference>
<dbReference type="InterPro" id="IPR023011">
    <property type="entry name" value="ATP_synth_F0_asu_AS"/>
</dbReference>
<dbReference type="InterPro" id="IPR035908">
    <property type="entry name" value="F0_ATP_A_sf"/>
</dbReference>
<dbReference type="NCBIfam" id="TIGR01131">
    <property type="entry name" value="ATP_synt_6_or_A"/>
    <property type="match status" value="1"/>
</dbReference>
<dbReference type="NCBIfam" id="NF004477">
    <property type="entry name" value="PRK05815.1-1"/>
    <property type="match status" value="1"/>
</dbReference>
<dbReference type="PANTHER" id="PTHR42823">
    <property type="entry name" value="ATP SYNTHASE SUBUNIT A, CHLOROPLASTIC"/>
    <property type="match status" value="1"/>
</dbReference>
<dbReference type="PANTHER" id="PTHR42823:SF3">
    <property type="entry name" value="ATP SYNTHASE SUBUNIT A, CHLOROPLASTIC"/>
    <property type="match status" value="1"/>
</dbReference>
<dbReference type="Pfam" id="PF00119">
    <property type="entry name" value="ATP-synt_A"/>
    <property type="match status" value="1"/>
</dbReference>
<dbReference type="SUPFAM" id="SSF81336">
    <property type="entry name" value="F1F0 ATP synthase subunit A"/>
    <property type="match status" value="1"/>
</dbReference>
<dbReference type="PROSITE" id="PS00449">
    <property type="entry name" value="ATPASE_A"/>
    <property type="match status" value="1"/>
</dbReference>
<name>ATP6_IDILO</name>
<reference key="1">
    <citation type="journal article" date="2004" name="Proc. Natl. Acad. Sci. U.S.A.">
        <title>Genome sequence of the deep-sea gamma-proteobacterium Idiomarina loihiensis reveals amino acid fermentation as a source of carbon and energy.</title>
        <authorList>
            <person name="Hou S."/>
            <person name="Saw J.H."/>
            <person name="Lee K.S."/>
            <person name="Freitas T.A."/>
            <person name="Belisle C."/>
            <person name="Kawarabayasi Y."/>
            <person name="Donachie S.P."/>
            <person name="Pikina A."/>
            <person name="Galperin M.Y."/>
            <person name="Koonin E.V."/>
            <person name="Makarova K.S."/>
            <person name="Omelchenko M.V."/>
            <person name="Sorokin A."/>
            <person name="Wolf Y.I."/>
            <person name="Li Q.X."/>
            <person name="Keum Y.S."/>
            <person name="Campbell S."/>
            <person name="Denery J."/>
            <person name="Aizawa S."/>
            <person name="Shibata S."/>
            <person name="Malahoff A."/>
            <person name="Alam M."/>
        </authorList>
    </citation>
    <scope>NUCLEOTIDE SEQUENCE [LARGE SCALE GENOMIC DNA]</scope>
    <source>
        <strain>ATCC BAA-735 / DSM 15497 / L2-TR</strain>
    </source>
</reference>
<organism>
    <name type="scientific">Idiomarina loihiensis (strain ATCC BAA-735 / DSM 15497 / L2-TR)</name>
    <dbReference type="NCBI Taxonomy" id="283942"/>
    <lineage>
        <taxon>Bacteria</taxon>
        <taxon>Pseudomonadati</taxon>
        <taxon>Pseudomonadota</taxon>
        <taxon>Gammaproteobacteria</taxon>
        <taxon>Alteromonadales</taxon>
        <taxon>Idiomarinaceae</taxon>
        <taxon>Idiomarina</taxon>
    </lineage>
</organism>
<proteinExistence type="inferred from homology"/>
<protein>
    <recommendedName>
        <fullName evidence="1">ATP synthase subunit a</fullName>
    </recommendedName>
    <alternativeName>
        <fullName evidence="1">ATP synthase F0 sector subunit a</fullName>
    </alternativeName>
    <alternativeName>
        <fullName evidence="1">F-ATPase subunit 6</fullName>
    </alternativeName>
</protein>
<comment type="function">
    <text evidence="1">Key component of the proton channel; it plays a direct role in the translocation of protons across the membrane.</text>
</comment>
<comment type="subunit">
    <text evidence="1">F-type ATPases have 2 components, CF(1) - the catalytic core - and CF(0) - the membrane proton channel. CF(1) has five subunits: alpha(3), beta(3), gamma(1), delta(1), epsilon(1). CF(0) has three main subunits: a(1), b(2) and c(9-12). The alpha and beta chains form an alternating ring which encloses part of the gamma chain. CF(1) is attached to CF(0) by a central stalk formed by the gamma and epsilon chains, while a peripheral stalk is formed by the delta and b chains.</text>
</comment>
<comment type="subcellular location">
    <subcellularLocation>
        <location evidence="1">Cell inner membrane</location>
        <topology evidence="1">Multi-pass membrane protein</topology>
    </subcellularLocation>
</comment>
<comment type="similarity">
    <text evidence="1">Belongs to the ATPase A chain family.</text>
</comment>
<sequence length="265" mass="30176">MISGEQTPTQYIQHHLQNWTVGEGFWAVNVDTIFWSVLLGVLFLWSFRRVAKKSSAGVPGKWQCFVEMIVEFVDNSVKESFHGKDKLIAPLALTIFVWIFLMNLMDLIPVDWLPTAAMYGGYWLGFVEDPHDVYMKVVPTTDLNTTFALSLSVFALIIIYSIKYKGVKGFAKEMTFTPFNHWALIPVNFVLESITLLAKPASLALRLFGNMYAGELIFILIAMIGFWQLPAHFAWAVFHILVITLQAFIFMMLTIVYLSMASSEH</sequence>
<evidence type="ECO:0000255" key="1">
    <source>
        <dbReference type="HAMAP-Rule" id="MF_01393"/>
    </source>
</evidence>
<gene>
    <name evidence="1" type="primary">atpB</name>
    <name type="ordered locus">IL2625</name>
</gene>
<keyword id="KW-0066">ATP synthesis</keyword>
<keyword id="KW-0997">Cell inner membrane</keyword>
<keyword id="KW-1003">Cell membrane</keyword>
<keyword id="KW-0138">CF(0)</keyword>
<keyword id="KW-0375">Hydrogen ion transport</keyword>
<keyword id="KW-0406">Ion transport</keyword>
<keyword id="KW-0472">Membrane</keyword>
<keyword id="KW-1185">Reference proteome</keyword>
<keyword id="KW-0812">Transmembrane</keyword>
<keyword id="KW-1133">Transmembrane helix</keyword>
<keyword id="KW-0813">Transport</keyword>
<feature type="chain" id="PRO_0000362333" description="ATP synthase subunit a">
    <location>
        <begin position="1"/>
        <end position="265"/>
    </location>
</feature>
<feature type="transmembrane region" description="Helical" evidence="1">
    <location>
        <begin position="25"/>
        <end position="45"/>
    </location>
</feature>
<feature type="transmembrane region" description="Helical" evidence="1">
    <location>
        <begin position="88"/>
        <end position="108"/>
    </location>
</feature>
<feature type="transmembrane region" description="Helical" evidence="1">
    <location>
        <begin position="142"/>
        <end position="162"/>
    </location>
</feature>
<feature type="transmembrane region" description="Helical" evidence="1">
    <location>
        <begin position="207"/>
        <end position="227"/>
    </location>
</feature>
<feature type="transmembrane region" description="Helical" evidence="1">
    <location>
        <begin position="233"/>
        <end position="253"/>
    </location>
</feature>
<accession>Q5QZI0</accession>